<gene>
    <name type="ordered locus">Rcas_2292</name>
</gene>
<sequence length="100" mass="11009">MNPRQLEQMARQMQKEMMRIQEELANATVEGTAGSYITVTMNGHREIKSIKIAPEVVDPDDIETLQDLIVAAITDASKKAQELAEQRLGPLAGGMKLPGF</sequence>
<proteinExistence type="inferred from homology"/>
<name>Y2292_ROSCS</name>
<comment type="function">
    <text evidence="1">Binds to DNA and alters its conformation. May be involved in regulation of gene expression, nucleoid organization and DNA protection.</text>
</comment>
<comment type="subunit">
    <text evidence="1">Homodimer.</text>
</comment>
<comment type="subcellular location">
    <subcellularLocation>
        <location evidence="1">Cytoplasm</location>
        <location evidence="1">Nucleoid</location>
    </subcellularLocation>
</comment>
<comment type="similarity">
    <text evidence="1">Belongs to the YbaB/EbfC family.</text>
</comment>
<accession>A7NFA1</accession>
<reference key="1">
    <citation type="submission" date="2007-08" db="EMBL/GenBank/DDBJ databases">
        <title>Complete sequence of Roseiflexus castenholzii DSM 13941.</title>
        <authorList>
            <consortium name="US DOE Joint Genome Institute"/>
            <person name="Copeland A."/>
            <person name="Lucas S."/>
            <person name="Lapidus A."/>
            <person name="Barry K."/>
            <person name="Glavina del Rio T."/>
            <person name="Dalin E."/>
            <person name="Tice H."/>
            <person name="Pitluck S."/>
            <person name="Thompson L.S."/>
            <person name="Brettin T."/>
            <person name="Bruce D."/>
            <person name="Detter J.C."/>
            <person name="Han C."/>
            <person name="Tapia R."/>
            <person name="Schmutz J."/>
            <person name="Larimer F."/>
            <person name="Land M."/>
            <person name="Hauser L."/>
            <person name="Kyrpides N."/>
            <person name="Mikhailova N."/>
            <person name="Bryant D.A."/>
            <person name="Hanada S."/>
            <person name="Tsukatani Y."/>
            <person name="Richardson P."/>
        </authorList>
    </citation>
    <scope>NUCLEOTIDE SEQUENCE [LARGE SCALE GENOMIC DNA]</scope>
    <source>
        <strain>DSM 13941 / HLO8</strain>
    </source>
</reference>
<protein>
    <recommendedName>
        <fullName evidence="1">Nucleoid-associated protein Rcas_2292</fullName>
    </recommendedName>
</protein>
<organism>
    <name type="scientific">Roseiflexus castenholzii (strain DSM 13941 / HLO8)</name>
    <dbReference type="NCBI Taxonomy" id="383372"/>
    <lineage>
        <taxon>Bacteria</taxon>
        <taxon>Bacillati</taxon>
        <taxon>Chloroflexota</taxon>
        <taxon>Chloroflexia</taxon>
        <taxon>Chloroflexales</taxon>
        <taxon>Roseiflexineae</taxon>
        <taxon>Roseiflexaceae</taxon>
        <taxon>Roseiflexus</taxon>
    </lineage>
</organism>
<keyword id="KW-0963">Cytoplasm</keyword>
<keyword id="KW-0238">DNA-binding</keyword>
<keyword id="KW-1185">Reference proteome</keyword>
<evidence type="ECO:0000255" key="1">
    <source>
        <dbReference type="HAMAP-Rule" id="MF_00274"/>
    </source>
</evidence>
<feature type="chain" id="PRO_1000078769" description="Nucleoid-associated protein Rcas_2292">
    <location>
        <begin position="1"/>
        <end position="100"/>
    </location>
</feature>
<dbReference type="EMBL" id="CP000804">
    <property type="protein sequence ID" value="ABU58375.1"/>
    <property type="molecule type" value="Genomic_DNA"/>
</dbReference>
<dbReference type="RefSeq" id="WP_012120799.1">
    <property type="nucleotide sequence ID" value="NC_009767.1"/>
</dbReference>
<dbReference type="SMR" id="A7NFA1"/>
<dbReference type="STRING" id="383372.Rcas_2292"/>
<dbReference type="KEGG" id="rca:Rcas_2292"/>
<dbReference type="eggNOG" id="COG0718">
    <property type="taxonomic scope" value="Bacteria"/>
</dbReference>
<dbReference type="HOGENOM" id="CLU_140930_1_0_0"/>
<dbReference type="OrthoDB" id="9795263at2"/>
<dbReference type="Proteomes" id="UP000000263">
    <property type="component" value="Chromosome"/>
</dbReference>
<dbReference type="GO" id="GO:0043590">
    <property type="term" value="C:bacterial nucleoid"/>
    <property type="evidence" value="ECO:0007669"/>
    <property type="project" value="UniProtKB-UniRule"/>
</dbReference>
<dbReference type="GO" id="GO:0005829">
    <property type="term" value="C:cytosol"/>
    <property type="evidence" value="ECO:0007669"/>
    <property type="project" value="TreeGrafter"/>
</dbReference>
<dbReference type="GO" id="GO:0003677">
    <property type="term" value="F:DNA binding"/>
    <property type="evidence" value="ECO:0007669"/>
    <property type="project" value="UniProtKB-UniRule"/>
</dbReference>
<dbReference type="Gene3D" id="3.30.1310.10">
    <property type="entry name" value="Nucleoid-associated protein YbaB-like domain"/>
    <property type="match status" value="1"/>
</dbReference>
<dbReference type="HAMAP" id="MF_00274">
    <property type="entry name" value="DNA_YbaB_EbfC"/>
    <property type="match status" value="1"/>
</dbReference>
<dbReference type="InterPro" id="IPR036894">
    <property type="entry name" value="YbaB-like_sf"/>
</dbReference>
<dbReference type="InterPro" id="IPR004401">
    <property type="entry name" value="YbaB/EbfC"/>
</dbReference>
<dbReference type="NCBIfam" id="TIGR00103">
    <property type="entry name" value="DNA_YbaB_EbfC"/>
    <property type="match status" value="1"/>
</dbReference>
<dbReference type="PANTHER" id="PTHR33449">
    <property type="entry name" value="NUCLEOID-ASSOCIATED PROTEIN YBAB"/>
    <property type="match status" value="1"/>
</dbReference>
<dbReference type="PANTHER" id="PTHR33449:SF1">
    <property type="entry name" value="NUCLEOID-ASSOCIATED PROTEIN YBAB"/>
    <property type="match status" value="1"/>
</dbReference>
<dbReference type="Pfam" id="PF02575">
    <property type="entry name" value="YbaB_DNA_bd"/>
    <property type="match status" value="1"/>
</dbReference>
<dbReference type="PIRSF" id="PIRSF004555">
    <property type="entry name" value="UCP004555"/>
    <property type="match status" value="1"/>
</dbReference>
<dbReference type="SUPFAM" id="SSF82607">
    <property type="entry name" value="YbaB-like"/>
    <property type="match status" value="1"/>
</dbReference>